<proteinExistence type="predicted"/>
<dbReference type="EMBL" id="X07501">
    <property type="protein sequence ID" value="CAA30383.1"/>
    <property type="molecule type" value="Genomic_DNA"/>
</dbReference>
<dbReference type="PIR" id="S00740">
    <property type="entry name" value="S00740"/>
</dbReference>
<dbReference type="SMR" id="P25768"/>
<dbReference type="Gene3D" id="3.10.580.10">
    <property type="entry name" value="CBS-domain"/>
    <property type="match status" value="1"/>
</dbReference>
<dbReference type="InterPro" id="IPR000644">
    <property type="entry name" value="CBS_dom"/>
</dbReference>
<dbReference type="InterPro" id="IPR046342">
    <property type="entry name" value="CBS_dom_sf"/>
</dbReference>
<dbReference type="InterPro" id="IPR051257">
    <property type="entry name" value="Diverse_CBS-Domain"/>
</dbReference>
<dbReference type="PANTHER" id="PTHR43080:SF2">
    <property type="entry name" value="CBS DOMAIN-CONTAINING PROTEIN"/>
    <property type="match status" value="1"/>
</dbReference>
<dbReference type="PANTHER" id="PTHR43080">
    <property type="entry name" value="CBS DOMAIN-CONTAINING PROTEIN CBSX3, MITOCHONDRIAL"/>
    <property type="match status" value="1"/>
</dbReference>
<dbReference type="Pfam" id="PF00571">
    <property type="entry name" value="CBS"/>
    <property type="match status" value="1"/>
</dbReference>
<dbReference type="SUPFAM" id="SSF54631">
    <property type="entry name" value="CBS-domain pair"/>
    <property type="match status" value="1"/>
</dbReference>
<dbReference type="PROSITE" id="PS51371">
    <property type="entry name" value="CBS"/>
    <property type="match status" value="1"/>
</dbReference>
<name>YNI1_METIV</name>
<reference key="1">
    <citation type="journal article" date="1988" name="J. Mol. Evol.">
        <title>Nucleotide sequence of regions homologous to nifH (nitrogenase Fe protein) from the nitrogen-fixing archaebacteria Methanococcus thermolithotrophicus and Methanobacterium ivanovii: evolutionary implications.</title>
        <authorList>
            <person name="Souillard N."/>
            <person name="Magot M."/>
            <person name="Possot O."/>
            <person name="Sibold L."/>
        </authorList>
    </citation>
    <scope>NUCLEOTIDE SEQUENCE [GENOMIC DNA]</scope>
</reference>
<feature type="chain" id="PRO_0000066327" description="Uncharacterized protein in nifH2 5'region">
    <location>
        <begin position="1" status="less than"/>
        <end position="96"/>
    </location>
</feature>
<feature type="domain" description="CBS" evidence="1">
    <location>
        <begin position="57"/>
        <end position="96"/>
    </location>
</feature>
<feature type="non-terminal residue">
    <location>
        <position position="1"/>
    </location>
</feature>
<protein>
    <recommendedName>
        <fullName>Uncharacterized protein in nifH2 5'region</fullName>
    </recommendedName>
</protein>
<accession>P25768</accession>
<sequence length="96" mass="10777">CKRRDIMKLIEVHSPNLNLLLPAPFDLIELPVRMEVGYEEIANDVRKAASVLVGEIMTKKVRTTKKDASISDAAALMDKHNVNRLPVVDENNKLVL</sequence>
<organism>
    <name type="scientific">Methanobacterium ivanovii</name>
    <dbReference type="NCBI Taxonomy" id="2163"/>
    <lineage>
        <taxon>Archaea</taxon>
        <taxon>Methanobacteriati</taxon>
        <taxon>Methanobacteriota</taxon>
        <taxon>Methanomada group</taxon>
        <taxon>Methanobacteria</taxon>
        <taxon>Methanobacteriales</taxon>
        <taxon>Methanobacteriaceae</taxon>
        <taxon>Methanobacterium</taxon>
    </lineage>
</organism>
<keyword id="KW-0129">CBS domain</keyword>
<evidence type="ECO:0000255" key="1">
    <source>
        <dbReference type="PROSITE-ProRule" id="PRU00703"/>
    </source>
</evidence>